<gene>
    <name evidence="1" type="primary">APOBEC1</name>
    <name evidence="6" type="synonym">REPR</name>
</gene>
<comment type="function">
    <text evidence="1 2 5">Cytidine deaminase catalyzing the cytidine to uridine postranscriptional editing of a variety of mRNAs (PubMed:8063816). Form complexes with cofactors that confer differential editing activity and selectivity. Responsible for the postranscriptional editing of a CAA codon for Gln to a UAA codon for stop in the apolipoprotein B mRNA. Also involved in CGA (Arg) to UGA (Stop) editing in the NF1 mRNA (By similarity). May also play a role in the epigenetic regulation of gene expression by participating in DNA demethylation (By similarity).</text>
</comment>
<comment type="catalytic activity">
    <reaction evidence="1">
        <text>a cytidine in mRNA + H2O + H(+) = a uridine in mRNA + NH4(+)</text>
        <dbReference type="Rhea" id="RHEA:74355"/>
        <dbReference type="Rhea" id="RHEA-COMP:14658"/>
        <dbReference type="Rhea" id="RHEA-COMP:15145"/>
        <dbReference type="ChEBI" id="CHEBI:15377"/>
        <dbReference type="ChEBI" id="CHEBI:15378"/>
        <dbReference type="ChEBI" id="CHEBI:28938"/>
        <dbReference type="ChEBI" id="CHEBI:65315"/>
        <dbReference type="ChEBI" id="CHEBI:82748"/>
    </reaction>
    <physiologicalReaction direction="left-to-right" evidence="1">
        <dbReference type="Rhea" id="RHEA:74356"/>
    </physiologicalReaction>
</comment>
<comment type="catalytic activity">
    <reaction evidence="5">
        <text>cytidine(6666) in apoB mRNA + H2O + H(+) = uridine(6666) in apoB mRNA + NH4(+)</text>
        <dbReference type="Rhea" id="RHEA:21772"/>
        <dbReference type="Rhea" id="RHEA-COMP:13888"/>
        <dbReference type="Rhea" id="RHEA-COMP:13889"/>
        <dbReference type="ChEBI" id="CHEBI:15377"/>
        <dbReference type="ChEBI" id="CHEBI:15378"/>
        <dbReference type="ChEBI" id="CHEBI:28938"/>
        <dbReference type="ChEBI" id="CHEBI:65315"/>
        <dbReference type="ChEBI" id="CHEBI:82748"/>
        <dbReference type="EC" id="3.5.4.36"/>
    </reaction>
    <physiologicalReaction direction="left-to-right" evidence="5">
        <dbReference type="Rhea" id="RHEA:21773"/>
    </physiologicalReaction>
</comment>
<comment type="cofactor">
    <cofactor evidence="5">
        <name>Zn(2+)</name>
        <dbReference type="ChEBI" id="CHEBI:29105"/>
    </cofactor>
    <text evidence="3">Binds 1 Zn(2+) ion per subunit.</text>
</comment>
<comment type="subunit">
    <text evidence="1">Homodimer. Interacts with A1CF; form an mRNA editing complex. Interacts with RBM47; form an mRNA editing complex. Found in a complex with CELF2/CUGBP2 and A1CF. Interacts with HNRPAB. Interacts with SYNCRIP.</text>
</comment>
<comment type="subcellular location">
    <subcellularLocation>
        <location evidence="1">Cytoplasm</location>
    </subcellularLocation>
    <subcellularLocation>
        <location evidence="1">Nucleus</location>
    </subcellularLocation>
</comment>
<comment type="tissue specificity">
    <text>Expressed exclusively in the intestine.</text>
</comment>
<comment type="similarity">
    <text evidence="7">Belongs to the cytidine and deoxycytidylate deaminase family.</text>
</comment>
<feature type="chain" id="PRO_0000171747" description="C-&gt;U-editing enzyme APOBEC-1">
    <location>
        <begin position="1"/>
        <end position="236"/>
    </location>
</feature>
<feature type="domain" description="CMP/dCMP-type deaminase" evidence="4">
    <location>
        <begin position="10"/>
        <end position="134"/>
    </location>
</feature>
<feature type="active site" description="Proton donor" evidence="3">
    <location>
        <position position="63"/>
    </location>
</feature>
<feature type="binding site" evidence="3">
    <location>
        <position position="61"/>
    </location>
    <ligand>
        <name>Zn(2+)</name>
        <dbReference type="ChEBI" id="CHEBI:29105"/>
        <note>catalytic</note>
    </ligand>
</feature>
<feature type="binding site" evidence="3">
    <location>
        <position position="93"/>
    </location>
    <ligand>
        <name>Zn(2+)</name>
        <dbReference type="ChEBI" id="CHEBI:29105"/>
        <note>catalytic</note>
    </ligand>
</feature>
<feature type="binding site" evidence="3">
    <location>
        <position position="96"/>
    </location>
    <ligand>
        <name>Zn(2+)</name>
        <dbReference type="ChEBI" id="CHEBI:29105"/>
        <note>catalytic</note>
    </ligand>
</feature>
<feature type="mutagenesis site" description="None or little editing activity." evidence="5">
    <original>H</original>
    <variation>A</variation>
    <location>
        <position position="61"/>
    </location>
</feature>
<feature type="mutagenesis site" description="Retains most editing activity." evidence="5">
    <original>H</original>
    <variation>C</variation>
    <location>
        <position position="61"/>
    </location>
</feature>
<feature type="mutagenesis site" description="Retains most editing activity." evidence="5">
    <original>V</original>
    <variation>A</variation>
    <location>
        <position position="62"/>
    </location>
</feature>
<feature type="mutagenesis site" description="None or little editing activity." evidence="5">
    <original>E</original>
    <variation>A</variation>
    <location>
        <position position="63"/>
    </location>
</feature>
<feature type="mutagenesis site" description="Retains most editing activity." evidence="5">
    <original>P</original>
    <variation>A</variation>
    <location>
        <position position="92"/>
    </location>
</feature>
<feature type="mutagenesis site" description="None or little editing activity." evidence="5">
    <original>C</original>
    <variation>A</variation>
    <location>
        <position position="93"/>
    </location>
</feature>
<feature type="mutagenesis site" description="None or little editing activity." evidence="5">
    <original>C</original>
    <variation>A</variation>
    <location>
        <position position="96"/>
    </location>
</feature>
<organism>
    <name type="scientific">Oryctolagus cuniculus</name>
    <name type="common">Rabbit</name>
    <dbReference type="NCBI Taxonomy" id="9986"/>
    <lineage>
        <taxon>Eukaryota</taxon>
        <taxon>Metazoa</taxon>
        <taxon>Chordata</taxon>
        <taxon>Craniata</taxon>
        <taxon>Vertebrata</taxon>
        <taxon>Euteleostomi</taxon>
        <taxon>Mammalia</taxon>
        <taxon>Eutheria</taxon>
        <taxon>Euarchontoglires</taxon>
        <taxon>Glires</taxon>
        <taxon>Lagomorpha</taxon>
        <taxon>Leporidae</taxon>
        <taxon>Oryctolagus</taxon>
    </lineage>
</organism>
<keyword id="KW-0963">Cytoplasm</keyword>
<keyword id="KW-0378">Hydrolase</keyword>
<keyword id="KW-0479">Metal-binding</keyword>
<keyword id="KW-0507">mRNA processing</keyword>
<keyword id="KW-0539">Nucleus</keyword>
<keyword id="KW-1185">Reference proteome</keyword>
<keyword id="KW-0862">Zinc</keyword>
<proteinExistence type="evidence at protein level"/>
<protein>
    <recommendedName>
        <fullName evidence="8">C-&gt;U-editing enzyme APOBEC-1</fullName>
        <ecNumber evidence="5">3.5.4.-</ecNumber>
    </recommendedName>
    <alternativeName>
        <fullName evidence="1">Apolipoprotein B mRNA-editing enzyme catalytic polypeptide 1</fullName>
        <shortName evidence="1">APOBEC-1</shortName>
        <shortName evidence="1">Apolipoprotein B mRNA-editing enzyme 1</shortName>
        <ecNumber evidence="5">3.5.4.36</ecNumber>
    </alternativeName>
    <alternativeName>
        <fullName evidence="8">mRNA(cytosine(6666)) deaminase 1</fullName>
    </alternativeName>
</protein>
<dbReference type="EC" id="3.5.4.-" evidence="5"/>
<dbReference type="EC" id="3.5.4.36" evidence="5"/>
<dbReference type="EMBL" id="U10695">
    <property type="protein sequence ID" value="AAA56718.1"/>
    <property type="molecule type" value="mRNA"/>
</dbReference>
<dbReference type="PIR" id="A53853">
    <property type="entry name" value="A53853"/>
</dbReference>
<dbReference type="RefSeq" id="NP_001075810.1">
    <property type="nucleotide sequence ID" value="NM_001082341.1"/>
</dbReference>
<dbReference type="SMR" id="P47855"/>
<dbReference type="FunCoup" id="P47855">
    <property type="interactions" value="20"/>
</dbReference>
<dbReference type="STRING" id="9986.ENSOCUP00000021115"/>
<dbReference type="PaxDb" id="9986-ENSOCUP00000021115"/>
<dbReference type="GeneID" id="100009191"/>
<dbReference type="KEGG" id="ocu:100009191"/>
<dbReference type="CTD" id="339"/>
<dbReference type="eggNOG" id="ENOG502SNW2">
    <property type="taxonomic scope" value="Eukaryota"/>
</dbReference>
<dbReference type="InParanoid" id="P47855"/>
<dbReference type="OrthoDB" id="5956704at2759"/>
<dbReference type="BRENDA" id="3.5.4.36">
    <property type="organism ID" value="1749"/>
</dbReference>
<dbReference type="Proteomes" id="UP000001811">
    <property type="component" value="Unplaced"/>
</dbReference>
<dbReference type="GO" id="GO:0005737">
    <property type="term" value="C:cytoplasm"/>
    <property type="evidence" value="ECO:0000250"/>
    <property type="project" value="UniProtKB"/>
</dbReference>
<dbReference type="GO" id="GO:0005634">
    <property type="term" value="C:nucleus"/>
    <property type="evidence" value="ECO:0007669"/>
    <property type="project" value="UniProtKB-SubCell"/>
</dbReference>
<dbReference type="GO" id="GO:0004126">
    <property type="term" value="F:cytidine deaminase activity"/>
    <property type="evidence" value="ECO:0007669"/>
    <property type="project" value="TreeGrafter"/>
</dbReference>
<dbReference type="GO" id="GO:0003723">
    <property type="term" value="F:RNA binding"/>
    <property type="evidence" value="ECO:0007669"/>
    <property type="project" value="TreeGrafter"/>
</dbReference>
<dbReference type="GO" id="GO:0008270">
    <property type="term" value="F:zinc ion binding"/>
    <property type="evidence" value="ECO:0007669"/>
    <property type="project" value="InterPro"/>
</dbReference>
<dbReference type="GO" id="GO:0016554">
    <property type="term" value="P:cytidine to uridine editing"/>
    <property type="evidence" value="ECO:0007669"/>
    <property type="project" value="TreeGrafter"/>
</dbReference>
<dbReference type="GO" id="GO:0006397">
    <property type="term" value="P:mRNA processing"/>
    <property type="evidence" value="ECO:0007669"/>
    <property type="project" value="UniProtKB-KW"/>
</dbReference>
<dbReference type="GO" id="GO:0044029">
    <property type="term" value="P:positive regulation of gene expression via chromosomal CpG island demethylation"/>
    <property type="evidence" value="ECO:0000250"/>
    <property type="project" value="UniProtKB"/>
</dbReference>
<dbReference type="CDD" id="cd01283">
    <property type="entry name" value="cytidine_deaminase"/>
    <property type="match status" value="1"/>
</dbReference>
<dbReference type="FunFam" id="3.40.140.10:FF:000049">
    <property type="entry name" value="C-&gt;U-editing enzyme APOBEC-1 isoform X2"/>
    <property type="match status" value="1"/>
</dbReference>
<dbReference type="Gene3D" id="3.40.140.10">
    <property type="entry name" value="Cytidine Deaminase, domain 2"/>
    <property type="match status" value="1"/>
</dbReference>
<dbReference type="InterPro" id="IPR016192">
    <property type="entry name" value="APOBEC/CMP_deaminase_Zn-bd"/>
</dbReference>
<dbReference type="InterPro" id="IPR041547">
    <property type="entry name" value="APOBEC1"/>
</dbReference>
<dbReference type="InterPro" id="IPR050610">
    <property type="entry name" value="APOBEC_Cyt_Deaminase"/>
</dbReference>
<dbReference type="InterPro" id="IPR002125">
    <property type="entry name" value="CMP_dCMP_dom"/>
</dbReference>
<dbReference type="InterPro" id="IPR016193">
    <property type="entry name" value="Cytidine_deaminase-like"/>
</dbReference>
<dbReference type="PANTHER" id="PTHR13857:SF26">
    <property type="entry name" value="C-U-EDITING ENZYME APOBEC-1"/>
    <property type="match status" value="1"/>
</dbReference>
<dbReference type="PANTHER" id="PTHR13857">
    <property type="entry name" value="MRNA EDITING ENZYME"/>
    <property type="match status" value="1"/>
</dbReference>
<dbReference type="Pfam" id="PF18774">
    <property type="entry name" value="APOBEC4_like"/>
    <property type="match status" value="1"/>
</dbReference>
<dbReference type="SUPFAM" id="SSF53927">
    <property type="entry name" value="Cytidine deaminase-like"/>
    <property type="match status" value="1"/>
</dbReference>
<dbReference type="PROSITE" id="PS00903">
    <property type="entry name" value="CYT_DCMP_DEAMINASES_1"/>
    <property type="match status" value="1"/>
</dbReference>
<dbReference type="PROSITE" id="PS51747">
    <property type="entry name" value="CYT_DCMP_DEAMINASES_2"/>
    <property type="match status" value="1"/>
</dbReference>
<reference key="1">
    <citation type="journal article" date="1994" name="J. Biol. Chem.">
        <title>Cloning and mutagenesis of the rabbit ApoB mRNA editing protein. A zinc motif is essential for catalytic activity, and noncatalytic auxiliary factor(s) of the editing complex are widely distributed.</title>
        <authorList>
            <person name="Yamanaka S."/>
            <person name="Poksay K.S."/>
            <person name="Balestra M.E."/>
            <person name="Zeng G.-Q."/>
            <person name="Innerarity T.L."/>
        </authorList>
    </citation>
    <scope>NUCLEOTIDE SEQUENCE [MRNA]</scope>
    <scope>FUNCTION</scope>
    <scope>CATALYTIC ACTIVITY</scope>
    <scope>COFACTOR</scope>
    <scope>MUTAGENESIS OF HIS-61; VAL-62; GLU-63; PRO-92; CYS-93 AND CYS-96</scope>
    <source>
        <strain>New Zealand white</strain>
        <tissue>Small intestine</tissue>
    </source>
</reference>
<name>ABEC1_RABIT</name>
<evidence type="ECO:0000250" key="1">
    <source>
        <dbReference type="UniProtKB" id="P41238"/>
    </source>
</evidence>
<evidence type="ECO:0000250" key="2">
    <source>
        <dbReference type="UniProtKB" id="P51908"/>
    </source>
</evidence>
<evidence type="ECO:0000250" key="3">
    <source>
        <dbReference type="UniProtKB" id="Q9Y235"/>
    </source>
</evidence>
<evidence type="ECO:0000255" key="4">
    <source>
        <dbReference type="PROSITE-ProRule" id="PRU01083"/>
    </source>
</evidence>
<evidence type="ECO:0000269" key="5">
    <source>
    </source>
</evidence>
<evidence type="ECO:0000303" key="6">
    <source>
    </source>
</evidence>
<evidence type="ECO:0000305" key="7"/>
<evidence type="ECO:0000305" key="8">
    <source>
    </source>
</evidence>
<accession>P47855</accession>
<sequence>MASEKGPSNKDYTLRRRIEPWEFEVFFDPQELRKEACLLYEIKWGASSKTWRSSGKNTTNHVEVNFLEKLTSEGRLGPSTCCSITWFLSWSPCWECSMAIREFLSQHPGVTLIIFVARLFQHMDRRNRQGLKDLVTSGVTVRVMSVSEYCYCWENFVNYPPGKAAQWPRYPPRWMLMYALELYCIILGLPPCLKISRRHQKQLTFFSLTPQYCHYKMIPPYILLATGLLQPSVPWR</sequence>